<sequence length="102" mass="11528">MQKARIKLSSTQHTELDGVCNQIKAIAEKTGVDMAGPIPLPTKALKVTTRKSTDGEGSSSFDRWTMRVHKRVIDIEADERTMKHIMKVRIPDTVQIEIELRN</sequence>
<keyword id="KW-0687">Ribonucleoprotein</keyword>
<keyword id="KW-0689">Ribosomal protein</keyword>
<gene>
    <name evidence="1" type="primary">rps10</name>
    <name type="ordered locus">MmarC5_0207</name>
</gene>
<protein>
    <recommendedName>
        <fullName evidence="1">Small ribosomal subunit protein uS10</fullName>
    </recommendedName>
    <alternativeName>
        <fullName evidence="2">30S ribosomal protein S10</fullName>
    </alternativeName>
</protein>
<reference key="1">
    <citation type="submission" date="2007-03" db="EMBL/GenBank/DDBJ databases">
        <title>Complete sequence of chromosome of Methanococcus maripaludis C5.</title>
        <authorList>
            <consortium name="US DOE Joint Genome Institute"/>
            <person name="Copeland A."/>
            <person name="Lucas S."/>
            <person name="Lapidus A."/>
            <person name="Barry K."/>
            <person name="Glavina del Rio T."/>
            <person name="Dalin E."/>
            <person name="Tice H."/>
            <person name="Pitluck S."/>
            <person name="Chertkov O."/>
            <person name="Brettin T."/>
            <person name="Bruce D."/>
            <person name="Han C."/>
            <person name="Detter J.C."/>
            <person name="Schmutz J."/>
            <person name="Larimer F."/>
            <person name="Land M."/>
            <person name="Hauser L."/>
            <person name="Kyrpides N."/>
            <person name="Mikhailova N."/>
            <person name="Sieprawska-Lupa M."/>
            <person name="Whitman W.B."/>
            <person name="Richardson P."/>
        </authorList>
    </citation>
    <scope>NUCLEOTIDE SEQUENCE [LARGE SCALE GENOMIC DNA]</scope>
    <source>
        <strain>C5 / ATCC BAA-1333</strain>
    </source>
</reference>
<organism>
    <name type="scientific">Methanococcus maripaludis (strain C5 / ATCC BAA-1333)</name>
    <dbReference type="NCBI Taxonomy" id="402880"/>
    <lineage>
        <taxon>Archaea</taxon>
        <taxon>Methanobacteriati</taxon>
        <taxon>Methanobacteriota</taxon>
        <taxon>Methanomada group</taxon>
        <taxon>Methanococci</taxon>
        <taxon>Methanococcales</taxon>
        <taxon>Methanococcaceae</taxon>
        <taxon>Methanococcus</taxon>
    </lineage>
</organism>
<feature type="chain" id="PRO_1000015053" description="Small ribosomal subunit protein uS10">
    <location>
        <begin position="1"/>
        <end position="102"/>
    </location>
</feature>
<dbReference type="EMBL" id="CP000609">
    <property type="protein sequence ID" value="ABO34523.1"/>
    <property type="molecule type" value="Genomic_DNA"/>
</dbReference>
<dbReference type="RefSeq" id="WP_011867981.1">
    <property type="nucleotide sequence ID" value="NC_009135.1"/>
</dbReference>
<dbReference type="SMR" id="A4FWE8"/>
<dbReference type="STRING" id="402880.MmarC5_0207"/>
<dbReference type="GeneID" id="4928261"/>
<dbReference type="KEGG" id="mmq:MmarC5_0207"/>
<dbReference type="eggNOG" id="arCOG01758">
    <property type="taxonomic scope" value="Archaea"/>
</dbReference>
<dbReference type="HOGENOM" id="CLU_122625_0_1_2"/>
<dbReference type="OrthoDB" id="371736at2157"/>
<dbReference type="Proteomes" id="UP000000253">
    <property type="component" value="Chromosome"/>
</dbReference>
<dbReference type="GO" id="GO:0015935">
    <property type="term" value="C:small ribosomal subunit"/>
    <property type="evidence" value="ECO:0007669"/>
    <property type="project" value="InterPro"/>
</dbReference>
<dbReference type="GO" id="GO:0003735">
    <property type="term" value="F:structural constituent of ribosome"/>
    <property type="evidence" value="ECO:0007669"/>
    <property type="project" value="InterPro"/>
</dbReference>
<dbReference type="GO" id="GO:0000049">
    <property type="term" value="F:tRNA binding"/>
    <property type="evidence" value="ECO:0007669"/>
    <property type="project" value="UniProtKB-UniRule"/>
</dbReference>
<dbReference type="GO" id="GO:0006412">
    <property type="term" value="P:translation"/>
    <property type="evidence" value="ECO:0007669"/>
    <property type="project" value="UniProtKB-UniRule"/>
</dbReference>
<dbReference type="FunFam" id="3.30.70.600:FF:000004">
    <property type="entry name" value="30S ribosomal protein S10"/>
    <property type="match status" value="1"/>
</dbReference>
<dbReference type="Gene3D" id="3.30.70.600">
    <property type="entry name" value="Ribosomal protein S10 domain"/>
    <property type="match status" value="1"/>
</dbReference>
<dbReference type="HAMAP" id="MF_00508">
    <property type="entry name" value="Ribosomal_uS10"/>
    <property type="match status" value="1"/>
</dbReference>
<dbReference type="InterPro" id="IPR001848">
    <property type="entry name" value="Ribosomal_uS10"/>
</dbReference>
<dbReference type="InterPro" id="IPR018268">
    <property type="entry name" value="Ribosomal_uS10_CS"/>
</dbReference>
<dbReference type="InterPro" id="IPR027486">
    <property type="entry name" value="Ribosomal_uS10_dom"/>
</dbReference>
<dbReference type="InterPro" id="IPR036838">
    <property type="entry name" value="Ribosomal_uS10_dom_sf"/>
</dbReference>
<dbReference type="InterPro" id="IPR005729">
    <property type="entry name" value="Ribosomal_uS10_euk/arc"/>
</dbReference>
<dbReference type="NCBIfam" id="TIGR01046">
    <property type="entry name" value="uS10_euk_arch"/>
    <property type="match status" value="1"/>
</dbReference>
<dbReference type="PANTHER" id="PTHR11700">
    <property type="entry name" value="30S RIBOSOMAL PROTEIN S10 FAMILY MEMBER"/>
    <property type="match status" value="1"/>
</dbReference>
<dbReference type="Pfam" id="PF00338">
    <property type="entry name" value="Ribosomal_S10"/>
    <property type="match status" value="1"/>
</dbReference>
<dbReference type="PRINTS" id="PR00971">
    <property type="entry name" value="RIBOSOMALS10"/>
</dbReference>
<dbReference type="SMART" id="SM01403">
    <property type="entry name" value="Ribosomal_S10"/>
    <property type="match status" value="1"/>
</dbReference>
<dbReference type="SUPFAM" id="SSF54999">
    <property type="entry name" value="Ribosomal protein S10"/>
    <property type="match status" value="1"/>
</dbReference>
<dbReference type="PROSITE" id="PS00361">
    <property type="entry name" value="RIBOSOMAL_S10"/>
    <property type="match status" value="1"/>
</dbReference>
<comment type="function">
    <text evidence="1">Involved in the binding of tRNA to the ribosomes.</text>
</comment>
<comment type="subunit">
    <text evidence="1">Part of the 30S ribosomal subunit.</text>
</comment>
<comment type="similarity">
    <text evidence="1">Belongs to the universal ribosomal protein uS10 family.</text>
</comment>
<name>RS10_METM5</name>
<accession>A4FWE8</accession>
<proteinExistence type="inferred from homology"/>
<evidence type="ECO:0000255" key="1">
    <source>
        <dbReference type="HAMAP-Rule" id="MF_00508"/>
    </source>
</evidence>
<evidence type="ECO:0000305" key="2"/>